<proteinExistence type="inferred from homology"/>
<organism>
    <name type="scientific">Streptococcus uberis (strain ATCC BAA-854 / 0140J)</name>
    <dbReference type="NCBI Taxonomy" id="218495"/>
    <lineage>
        <taxon>Bacteria</taxon>
        <taxon>Bacillati</taxon>
        <taxon>Bacillota</taxon>
        <taxon>Bacilli</taxon>
        <taxon>Lactobacillales</taxon>
        <taxon>Streptococcaceae</taxon>
        <taxon>Streptococcus</taxon>
    </lineage>
</organism>
<evidence type="ECO:0000255" key="1">
    <source>
        <dbReference type="HAMAP-Rule" id="MF_00242"/>
    </source>
</evidence>
<feature type="chain" id="PRO_1000125325" description="Arginine deiminase">
    <location>
        <begin position="1"/>
        <end position="410"/>
    </location>
</feature>
<feature type="active site" description="Amidino-cysteine intermediate" evidence="1">
    <location>
        <position position="400"/>
    </location>
</feature>
<protein>
    <recommendedName>
        <fullName evidence="1">Arginine deiminase</fullName>
        <shortName evidence="1">ADI</shortName>
        <ecNumber evidence="1">3.5.3.6</ecNumber>
    </recommendedName>
    <alternativeName>
        <fullName evidence="1">Arginine dihydrolase</fullName>
        <shortName evidence="1">AD</shortName>
    </alternativeName>
</protein>
<sequence>MTANSPIHVYSEIGKLKKVMLHRPGKEIENLMPDYLERLLFDDIPFLENAQKEHDAFAEALRNEGIEVLYLEKLAAESLINEEVRTAFIDEYIAEANIRGRATKEAIRNMLMSIEDNQELIDKTMAGIQKSELPEISDEEKGLTDLVESDYPFAIDPMPNLYFTRDPFATIGAGVSLNHMFSETRNRETLYGKYIFTHHPEYGGKVPMVYDRSENTRIEGGDELVLSKDVLAVGISQRTDAASIEKLLVNIFKQNLGFKKVLAFEFANNRKFMHLDTVFTMVDYDKFTIHPEIEGDLRVYSVTYENDKLKIVEEKGDLAELLAANLGVEKVELIRCGGDNIVAAGREQWNDGSNTLTIAPGVVVVYNRNTITNAILESKGLRLVKIEGSELVRGRGGPRCMSMPFEREDI</sequence>
<comment type="catalytic activity">
    <reaction evidence="1">
        <text>L-arginine + H2O = L-citrulline + NH4(+)</text>
        <dbReference type="Rhea" id="RHEA:19597"/>
        <dbReference type="ChEBI" id="CHEBI:15377"/>
        <dbReference type="ChEBI" id="CHEBI:28938"/>
        <dbReference type="ChEBI" id="CHEBI:32682"/>
        <dbReference type="ChEBI" id="CHEBI:57743"/>
        <dbReference type="EC" id="3.5.3.6"/>
    </reaction>
</comment>
<comment type="pathway">
    <text evidence="1">Amino-acid degradation; L-arginine degradation via ADI pathway; carbamoyl phosphate from L-arginine: step 1/2.</text>
</comment>
<comment type="subcellular location">
    <subcellularLocation>
        <location evidence="1">Cytoplasm</location>
    </subcellularLocation>
</comment>
<comment type="similarity">
    <text evidence="1">Belongs to the arginine deiminase family.</text>
</comment>
<reference key="1">
    <citation type="journal article" date="2009" name="BMC Genomics">
        <title>Evidence for niche adaptation in the genome of the bovine pathogen Streptococcus uberis.</title>
        <authorList>
            <person name="Ward P.N."/>
            <person name="Holden M.T.G."/>
            <person name="Leigh J.A."/>
            <person name="Lennard N."/>
            <person name="Bignell A."/>
            <person name="Barron A."/>
            <person name="Clark L."/>
            <person name="Quail M.A."/>
            <person name="Woodward J."/>
            <person name="Barrell B.G."/>
            <person name="Egan S.A."/>
            <person name="Field T.R."/>
            <person name="Maskell D."/>
            <person name="Kehoe M."/>
            <person name="Dowson C.G."/>
            <person name="Chanter N."/>
            <person name="Whatmore A.M."/>
            <person name="Bentley S.D."/>
            <person name="Parkhill J."/>
        </authorList>
    </citation>
    <scope>NUCLEOTIDE SEQUENCE [LARGE SCALE GENOMIC DNA]</scope>
    <source>
        <strain>ATCC BAA-854 / 0140J</strain>
    </source>
</reference>
<dbReference type="EC" id="3.5.3.6" evidence="1"/>
<dbReference type="EMBL" id="AM946015">
    <property type="protein sequence ID" value="CAR42885.1"/>
    <property type="molecule type" value="Genomic_DNA"/>
</dbReference>
<dbReference type="RefSeq" id="WP_015911653.1">
    <property type="nucleotide sequence ID" value="NC_012004.1"/>
</dbReference>
<dbReference type="SMR" id="B9DUZ0"/>
<dbReference type="STRING" id="218495.SUB1328"/>
<dbReference type="GeneID" id="93826596"/>
<dbReference type="KEGG" id="sub:SUB1328"/>
<dbReference type="eggNOG" id="COG2235">
    <property type="taxonomic scope" value="Bacteria"/>
</dbReference>
<dbReference type="HOGENOM" id="CLU_052662_0_1_9"/>
<dbReference type="OrthoDB" id="9807502at2"/>
<dbReference type="UniPathway" id="UPA00254">
    <property type="reaction ID" value="UER00364"/>
</dbReference>
<dbReference type="Proteomes" id="UP000000449">
    <property type="component" value="Chromosome"/>
</dbReference>
<dbReference type="GO" id="GO:0005737">
    <property type="term" value="C:cytoplasm"/>
    <property type="evidence" value="ECO:0007669"/>
    <property type="project" value="UniProtKB-SubCell"/>
</dbReference>
<dbReference type="GO" id="GO:0016990">
    <property type="term" value="F:arginine deiminase activity"/>
    <property type="evidence" value="ECO:0007669"/>
    <property type="project" value="UniProtKB-UniRule"/>
</dbReference>
<dbReference type="GO" id="GO:0019547">
    <property type="term" value="P:arginine catabolic process to ornithine"/>
    <property type="evidence" value="ECO:0007669"/>
    <property type="project" value="UniProtKB-UniRule"/>
</dbReference>
<dbReference type="GO" id="GO:0019546">
    <property type="term" value="P:arginine deiminase pathway"/>
    <property type="evidence" value="ECO:0007669"/>
    <property type="project" value="TreeGrafter"/>
</dbReference>
<dbReference type="Gene3D" id="1.10.3930.10">
    <property type="entry name" value="Arginine deiminase"/>
    <property type="match status" value="1"/>
</dbReference>
<dbReference type="Gene3D" id="3.75.10.10">
    <property type="entry name" value="L-arginine/glycine Amidinotransferase, Chain A"/>
    <property type="match status" value="1"/>
</dbReference>
<dbReference type="HAMAP" id="MF_00242">
    <property type="entry name" value="Arg_deiminase"/>
    <property type="match status" value="1"/>
</dbReference>
<dbReference type="InterPro" id="IPR003876">
    <property type="entry name" value="Arg_deiminase"/>
</dbReference>
<dbReference type="NCBIfam" id="TIGR01078">
    <property type="entry name" value="arcA"/>
    <property type="match status" value="1"/>
</dbReference>
<dbReference type="NCBIfam" id="NF002381">
    <property type="entry name" value="PRK01388.1"/>
    <property type="match status" value="1"/>
</dbReference>
<dbReference type="PANTHER" id="PTHR47271">
    <property type="entry name" value="ARGININE DEIMINASE"/>
    <property type="match status" value="1"/>
</dbReference>
<dbReference type="PANTHER" id="PTHR47271:SF2">
    <property type="entry name" value="ARGININE DEIMINASE"/>
    <property type="match status" value="1"/>
</dbReference>
<dbReference type="Pfam" id="PF02274">
    <property type="entry name" value="ADI"/>
    <property type="match status" value="1"/>
</dbReference>
<dbReference type="PIRSF" id="PIRSF006356">
    <property type="entry name" value="Arg_deiminase"/>
    <property type="match status" value="1"/>
</dbReference>
<dbReference type="PRINTS" id="PR01466">
    <property type="entry name" value="ARGDEIMINASE"/>
</dbReference>
<dbReference type="SUPFAM" id="SSF55909">
    <property type="entry name" value="Pentein"/>
    <property type="match status" value="1"/>
</dbReference>
<gene>
    <name evidence="1" type="primary">arcA</name>
    <name type="ordered locus">SUB1328</name>
</gene>
<name>ARCA_STRU0</name>
<accession>B9DUZ0</accession>
<keyword id="KW-0056">Arginine metabolism</keyword>
<keyword id="KW-0963">Cytoplasm</keyword>
<keyword id="KW-0378">Hydrolase</keyword>
<keyword id="KW-1185">Reference proteome</keyword>